<name>SYY1_BACC1</name>
<organism>
    <name type="scientific">Bacillus cereus (strain ATCC 10987 / NRS 248)</name>
    <dbReference type="NCBI Taxonomy" id="222523"/>
    <lineage>
        <taxon>Bacteria</taxon>
        <taxon>Bacillati</taxon>
        <taxon>Bacillota</taxon>
        <taxon>Bacilli</taxon>
        <taxon>Bacillales</taxon>
        <taxon>Bacillaceae</taxon>
        <taxon>Bacillus</taxon>
        <taxon>Bacillus cereus group</taxon>
    </lineage>
</organism>
<dbReference type="EC" id="6.1.1.1" evidence="1"/>
<dbReference type="EMBL" id="AE017194">
    <property type="protein sequence ID" value="AAS43697.1"/>
    <property type="molecule type" value="Genomic_DNA"/>
</dbReference>
<dbReference type="SMR" id="Q72Z73"/>
<dbReference type="KEGG" id="bca:BCE_4796"/>
<dbReference type="HOGENOM" id="CLU_024003_0_3_9"/>
<dbReference type="Proteomes" id="UP000002527">
    <property type="component" value="Chromosome"/>
</dbReference>
<dbReference type="GO" id="GO:0005829">
    <property type="term" value="C:cytosol"/>
    <property type="evidence" value="ECO:0007669"/>
    <property type="project" value="TreeGrafter"/>
</dbReference>
<dbReference type="GO" id="GO:0005524">
    <property type="term" value="F:ATP binding"/>
    <property type="evidence" value="ECO:0007669"/>
    <property type="project" value="UniProtKB-UniRule"/>
</dbReference>
<dbReference type="GO" id="GO:0003723">
    <property type="term" value="F:RNA binding"/>
    <property type="evidence" value="ECO:0007669"/>
    <property type="project" value="UniProtKB-KW"/>
</dbReference>
<dbReference type="GO" id="GO:0004831">
    <property type="term" value="F:tyrosine-tRNA ligase activity"/>
    <property type="evidence" value="ECO:0007669"/>
    <property type="project" value="UniProtKB-UniRule"/>
</dbReference>
<dbReference type="GO" id="GO:0006437">
    <property type="term" value="P:tyrosyl-tRNA aminoacylation"/>
    <property type="evidence" value="ECO:0007669"/>
    <property type="project" value="UniProtKB-UniRule"/>
</dbReference>
<dbReference type="CDD" id="cd00165">
    <property type="entry name" value="S4"/>
    <property type="match status" value="1"/>
</dbReference>
<dbReference type="CDD" id="cd00395">
    <property type="entry name" value="Tyr_Trp_RS_core"/>
    <property type="match status" value="1"/>
</dbReference>
<dbReference type="FunFam" id="1.10.240.10:FF:000001">
    <property type="entry name" value="Tyrosine--tRNA ligase"/>
    <property type="match status" value="1"/>
</dbReference>
<dbReference type="FunFam" id="3.10.290.10:FF:000012">
    <property type="entry name" value="Tyrosine--tRNA ligase"/>
    <property type="match status" value="1"/>
</dbReference>
<dbReference type="FunFam" id="3.40.50.620:FF:000008">
    <property type="entry name" value="Tyrosine--tRNA ligase"/>
    <property type="match status" value="1"/>
</dbReference>
<dbReference type="Gene3D" id="3.40.50.620">
    <property type="entry name" value="HUPs"/>
    <property type="match status" value="1"/>
</dbReference>
<dbReference type="Gene3D" id="3.10.290.10">
    <property type="entry name" value="RNA-binding S4 domain"/>
    <property type="match status" value="1"/>
</dbReference>
<dbReference type="Gene3D" id="1.10.240.10">
    <property type="entry name" value="Tyrosyl-Transfer RNA Synthetase"/>
    <property type="match status" value="1"/>
</dbReference>
<dbReference type="HAMAP" id="MF_02006">
    <property type="entry name" value="Tyr_tRNA_synth_type1"/>
    <property type="match status" value="1"/>
</dbReference>
<dbReference type="InterPro" id="IPR001412">
    <property type="entry name" value="aa-tRNA-synth_I_CS"/>
</dbReference>
<dbReference type="InterPro" id="IPR002305">
    <property type="entry name" value="aa-tRNA-synth_Ic"/>
</dbReference>
<dbReference type="InterPro" id="IPR014729">
    <property type="entry name" value="Rossmann-like_a/b/a_fold"/>
</dbReference>
<dbReference type="InterPro" id="IPR002942">
    <property type="entry name" value="S4_RNA-bd"/>
</dbReference>
<dbReference type="InterPro" id="IPR036986">
    <property type="entry name" value="S4_RNA-bd_sf"/>
</dbReference>
<dbReference type="InterPro" id="IPR054608">
    <property type="entry name" value="SYY-like_C"/>
</dbReference>
<dbReference type="InterPro" id="IPR002307">
    <property type="entry name" value="Tyr-tRNA-ligase"/>
</dbReference>
<dbReference type="InterPro" id="IPR024088">
    <property type="entry name" value="Tyr-tRNA-ligase_bac-type"/>
</dbReference>
<dbReference type="InterPro" id="IPR024107">
    <property type="entry name" value="Tyr-tRNA-ligase_bac_1"/>
</dbReference>
<dbReference type="NCBIfam" id="TIGR00234">
    <property type="entry name" value="tyrS"/>
    <property type="match status" value="1"/>
</dbReference>
<dbReference type="PANTHER" id="PTHR11766:SF0">
    <property type="entry name" value="TYROSINE--TRNA LIGASE, MITOCHONDRIAL"/>
    <property type="match status" value="1"/>
</dbReference>
<dbReference type="PANTHER" id="PTHR11766">
    <property type="entry name" value="TYROSYL-TRNA SYNTHETASE"/>
    <property type="match status" value="1"/>
</dbReference>
<dbReference type="Pfam" id="PF22421">
    <property type="entry name" value="SYY_C-terminal"/>
    <property type="match status" value="1"/>
</dbReference>
<dbReference type="Pfam" id="PF00579">
    <property type="entry name" value="tRNA-synt_1b"/>
    <property type="match status" value="1"/>
</dbReference>
<dbReference type="PRINTS" id="PR01040">
    <property type="entry name" value="TRNASYNTHTYR"/>
</dbReference>
<dbReference type="SMART" id="SM00363">
    <property type="entry name" value="S4"/>
    <property type="match status" value="1"/>
</dbReference>
<dbReference type="SUPFAM" id="SSF55174">
    <property type="entry name" value="Alpha-L RNA-binding motif"/>
    <property type="match status" value="1"/>
</dbReference>
<dbReference type="SUPFAM" id="SSF52374">
    <property type="entry name" value="Nucleotidylyl transferase"/>
    <property type="match status" value="1"/>
</dbReference>
<dbReference type="PROSITE" id="PS00178">
    <property type="entry name" value="AA_TRNA_LIGASE_I"/>
    <property type="match status" value="1"/>
</dbReference>
<dbReference type="PROSITE" id="PS50889">
    <property type="entry name" value="S4"/>
    <property type="match status" value="1"/>
</dbReference>
<accession>Q72Z73</accession>
<evidence type="ECO:0000255" key="1">
    <source>
        <dbReference type="HAMAP-Rule" id="MF_02006"/>
    </source>
</evidence>
<gene>
    <name evidence="1" type="primary">tyrS1</name>
    <name type="ordered locus">BCE_4796</name>
</gene>
<comment type="function">
    <text evidence="1">Catalyzes the attachment of tyrosine to tRNA(Tyr) in a two-step reaction: tyrosine is first activated by ATP to form Tyr-AMP and then transferred to the acceptor end of tRNA(Tyr).</text>
</comment>
<comment type="catalytic activity">
    <reaction evidence="1">
        <text>tRNA(Tyr) + L-tyrosine + ATP = L-tyrosyl-tRNA(Tyr) + AMP + diphosphate + H(+)</text>
        <dbReference type="Rhea" id="RHEA:10220"/>
        <dbReference type="Rhea" id="RHEA-COMP:9706"/>
        <dbReference type="Rhea" id="RHEA-COMP:9707"/>
        <dbReference type="ChEBI" id="CHEBI:15378"/>
        <dbReference type="ChEBI" id="CHEBI:30616"/>
        <dbReference type="ChEBI" id="CHEBI:33019"/>
        <dbReference type="ChEBI" id="CHEBI:58315"/>
        <dbReference type="ChEBI" id="CHEBI:78442"/>
        <dbReference type="ChEBI" id="CHEBI:78536"/>
        <dbReference type="ChEBI" id="CHEBI:456215"/>
        <dbReference type="EC" id="6.1.1.1"/>
    </reaction>
</comment>
<comment type="subunit">
    <text evidence="1">Homodimer.</text>
</comment>
<comment type="subcellular location">
    <subcellularLocation>
        <location evidence="1">Cytoplasm</location>
    </subcellularLocation>
</comment>
<comment type="similarity">
    <text evidence="1">Belongs to the class-I aminoacyl-tRNA synthetase family. TyrS type 1 subfamily.</text>
</comment>
<reference key="1">
    <citation type="journal article" date="2004" name="Nucleic Acids Res.">
        <title>The genome sequence of Bacillus cereus ATCC 10987 reveals metabolic adaptations and a large plasmid related to Bacillus anthracis pXO1.</title>
        <authorList>
            <person name="Rasko D.A."/>
            <person name="Ravel J."/>
            <person name="Oekstad O.A."/>
            <person name="Helgason E."/>
            <person name="Cer R.Z."/>
            <person name="Jiang L."/>
            <person name="Shores K.A."/>
            <person name="Fouts D.E."/>
            <person name="Tourasse N.J."/>
            <person name="Angiuoli S.V."/>
            <person name="Kolonay J.F."/>
            <person name="Nelson W.C."/>
            <person name="Kolstoe A.-B."/>
            <person name="Fraser C.M."/>
            <person name="Read T.D."/>
        </authorList>
    </citation>
    <scope>NUCLEOTIDE SEQUENCE [LARGE SCALE GENOMIC DNA]</scope>
    <source>
        <strain>ATCC 10987 / NRS 248</strain>
    </source>
</reference>
<feature type="chain" id="PRO_0000234669" description="Tyrosine--tRNA ligase 1">
    <location>
        <begin position="1"/>
        <end position="418"/>
    </location>
</feature>
<feature type="domain" description="S4 RNA-binding" evidence="1">
    <location>
        <begin position="352"/>
        <end position="418"/>
    </location>
</feature>
<feature type="short sequence motif" description="'HIGH' region">
    <location>
        <begin position="39"/>
        <end position="48"/>
    </location>
</feature>
<feature type="short sequence motif" description="'KMSKS' region">
    <location>
        <begin position="230"/>
        <end position="234"/>
    </location>
</feature>
<feature type="binding site" evidence="1">
    <location>
        <position position="34"/>
    </location>
    <ligand>
        <name>L-tyrosine</name>
        <dbReference type="ChEBI" id="CHEBI:58315"/>
    </ligand>
</feature>
<feature type="binding site" evidence="1">
    <location>
        <position position="169"/>
    </location>
    <ligand>
        <name>L-tyrosine</name>
        <dbReference type="ChEBI" id="CHEBI:58315"/>
    </ligand>
</feature>
<feature type="binding site" evidence="1">
    <location>
        <position position="173"/>
    </location>
    <ligand>
        <name>L-tyrosine</name>
        <dbReference type="ChEBI" id="CHEBI:58315"/>
    </ligand>
</feature>
<feature type="binding site" evidence="1">
    <location>
        <position position="233"/>
    </location>
    <ligand>
        <name>ATP</name>
        <dbReference type="ChEBI" id="CHEBI:30616"/>
    </ligand>
</feature>
<sequence>MGILQDLEFRGLINQQTDAEGLEQLLEKESVKLYCGFDPTADSLHIGHMLPVLMLRRFQLAGHQPIALVGGGTGMIGDPSGKKAERTLNTKDTVAYYTESIKNQLSNFLEFENVDNPATMANNYDWLGNLDVISFLRDIGKNFGLNYMLAKDTVASRLETGISFTEFSYMILQSYDFLNLYQHHNCRLQIGGSDQWGNITAGLELIRKSEEDAKAYGLTIPLVTKSDGTKFGKTEGGAIWLDPEKTTPYEFYQFWINTDDRDVVKYLKYFTFLSHEEILELEKQVAEAPEKRAAQKALGAEMTKLVHGEEALEQAIKISAALFSGSVAELTASEIEQGFKDVPSVERTAEDTVLIDLLVESKISPSKRQAREDVTNGAIYVNGERTQALDYVVTEKDRIEGKFTIIRRGKKKYFLIRY</sequence>
<keyword id="KW-0030">Aminoacyl-tRNA synthetase</keyword>
<keyword id="KW-0067">ATP-binding</keyword>
<keyword id="KW-0963">Cytoplasm</keyword>
<keyword id="KW-0436">Ligase</keyword>
<keyword id="KW-0547">Nucleotide-binding</keyword>
<keyword id="KW-0648">Protein biosynthesis</keyword>
<keyword id="KW-0694">RNA-binding</keyword>
<protein>
    <recommendedName>
        <fullName evidence="1">Tyrosine--tRNA ligase 1</fullName>
        <ecNumber evidence="1">6.1.1.1</ecNumber>
    </recommendedName>
    <alternativeName>
        <fullName evidence="1">Tyrosyl-tRNA synthetase 1</fullName>
        <shortName evidence="1">TyrRS 1</shortName>
    </alternativeName>
</protein>
<proteinExistence type="inferred from homology"/>